<sequence length="129" mass="13832">MAKAPIRARKRVRKTVSDGVAHIHASFNNTIVTITDRQGNALGWATAGGSGFRGSRKSTPFAAQVAAERCAEAVKEYGIKNLEVMVKGPGPGRESTIRALNAAGFRITNITDVTPIPHNGCRPPKKRRV</sequence>
<reference key="1">
    <citation type="submission" date="2007-02" db="EMBL/GenBank/DDBJ databases">
        <title>Complete sequence of chromosome of Yersinia pestis Pestoides F.</title>
        <authorList>
            <consortium name="US DOE Joint Genome Institute"/>
            <person name="Copeland A."/>
            <person name="Lucas S."/>
            <person name="Lapidus A."/>
            <person name="Barry K."/>
            <person name="Detter J.C."/>
            <person name="Glavina del Rio T."/>
            <person name="Hammon N."/>
            <person name="Israni S."/>
            <person name="Dalin E."/>
            <person name="Tice H."/>
            <person name="Pitluck S."/>
            <person name="Di Bartolo G."/>
            <person name="Chain P."/>
            <person name="Malfatti S."/>
            <person name="Shin M."/>
            <person name="Vergez L."/>
            <person name="Schmutz J."/>
            <person name="Larimer F."/>
            <person name="Land M."/>
            <person name="Hauser L."/>
            <person name="Worsham P."/>
            <person name="Chu M."/>
            <person name="Bearden S."/>
            <person name="Garcia E."/>
            <person name="Richardson P."/>
        </authorList>
    </citation>
    <scope>NUCLEOTIDE SEQUENCE [LARGE SCALE GENOMIC DNA]</scope>
    <source>
        <strain>Pestoides F</strain>
    </source>
</reference>
<name>RS11_YERPP</name>
<proteinExistence type="inferred from homology"/>
<keyword id="KW-0687">Ribonucleoprotein</keyword>
<keyword id="KW-0689">Ribosomal protein</keyword>
<keyword id="KW-0694">RNA-binding</keyword>
<keyword id="KW-0699">rRNA-binding</keyword>
<gene>
    <name evidence="1" type="primary">rpsK</name>
    <name type="ordered locus">YPDSF_0154</name>
</gene>
<comment type="function">
    <text evidence="1">Located on the platform of the 30S subunit, it bridges several disparate RNA helices of the 16S rRNA. Forms part of the Shine-Dalgarno cleft in the 70S ribosome.</text>
</comment>
<comment type="subunit">
    <text evidence="1">Part of the 30S ribosomal subunit. Interacts with proteins S7 and S18. Binds to IF-3.</text>
</comment>
<comment type="similarity">
    <text evidence="1">Belongs to the universal ribosomal protein uS11 family.</text>
</comment>
<accession>A4TH13</accession>
<evidence type="ECO:0000255" key="1">
    <source>
        <dbReference type="HAMAP-Rule" id="MF_01310"/>
    </source>
</evidence>
<evidence type="ECO:0000305" key="2"/>
<feature type="chain" id="PRO_0000294891" description="Small ribosomal subunit protein uS11">
    <location>
        <begin position="1"/>
        <end position="129"/>
    </location>
</feature>
<dbReference type="EMBL" id="CP000668">
    <property type="protein sequence ID" value="ABP38576.1"/>
    <property type="molecule type" value="Genomic_DNA"/>
</dbReference>
<dbReference type="RefSeq" id="WP_002218948.1">
    <property type="nucleotide sequence ID" value="NZ_CP009715.1"/>
</dbReference>
<dbReference type="SMR" id="A4TH13"/>
<dbReference type="GeneID" id="96663173"/>
<dbReference type="KEGG" id="ypp:YPDSF_0154"/>
<dbReference type="PATRIC" id="fig|386656.14.peg.411"/>
<dbReference type="GO" id="GO:1990904">
    <property type="term" value="C:ribonucleoprotein complex"/>
    <property type="evidence" value="ECO:0007669"/>
    <property type="project" value="UniProtKB-KW"/>
</dbReference>
<dbReference type="GO" id="GO:0005840">
    <property type="term" value="C:ribosome"/>
    <property type="evidence" value="ECO:0007669"/>
    <property type="project" value="UniProtKB-KW"/>
</dbReference>
<dbReference type="GO" id="GO:0019843">
    <property type="term" value="F:rRNA binding"/>
    <property type="evidence" value="ECO:0007669"/>
    <property type="project" value="UniProtKB-UniRule"/>
</dbReference>
<dbReference type="GO" id="GO:0003735">
    <property type="term" value="F:structural constituent of ribosome"/>
    <property type="evidence" value="ECO:0007669"/>
    <property type="project" value="InterPro"/>
</dbReference>
<dbReference type="GO" id="GO:0006412">
    <property type="term" value="P:translation"/>
    <property type="evidence" value="ECO:0007669"/>
    <property type="project" value="UniProtKB-UniRule"/>
</dbReference>
<dbReference type="FunFam" id="3.30.420.80:FF:000001">
    <property type="entry name" value="30S ribosomal protein S11"/>
    <property type="match status" value="1"/>
</dbReference>
<dbReference type="Gene3D" id="3.30.420.80">
    <property type="entry name" value="Ribosomal protein S11"/>
    <property type="match status" value="1"/>
</dbReference>
<dbReference type="HAMAP" id="MF_01310">
    <property type="entry name" value="Ribosomal_uS11"/>
    <property type="match status" value="1"/>
</dbReference>
<dbReference type="InterPro" id="IPR001971">
    <property type="entry name" value="Ribosomal_uS11"/>
</dbReference>
<dbReference type="InterPro" id="IPR019981">
    <property type="entry name" value="Ribosomal_uS11_bac-type"/>
</dbReference>
<dbReference type="InterPro" id="IPR018102">
    <property type="entry name" value="Ribosomal_uS11_CS"/>
</dbReference>
<dbReference type="InterPro" id="IPR036967">
    <property type="entry name" value="Ribosomal_uS11_sf"/>
</dbReference>
<dbReference type="NCBIfam" id="NF003698">
    <property type="entry name" value="PRK05309.1"/>
    <property type="match status" value="1"/>
</dbReference>
<dbReference type="NCBIfam" id="TIGR03632">
    <property type="entry name" value="uS11_bact"/>
    <property type="match status" value="1"/>
</dbReference>
<dbReference type="PANTHER" id="PTHR11759">
    <property type="entry name" value="40S RIBOSOMAL PROTEIN S14/30S RIBOSOMAL PROTEIN S11"/>
    <property type="match status" value="1"/>
</dbReference>
<dbReference type="Pfam" id="PF00411">
    <property type="entry name" value="Ribosomal_S11"/>
    <property type="match status" value="1"/>
</dbReference>
<dbReference type="PIRSF" id="PIRSF002131">
    <property type="entry name" value="Ribosomal_S11"/>
    <property type="match status" value="1"/>
</dbReference>
<dbReference type="SUPFAM" id="SSF53137">
    <property type="entry name" value="Translational machinery components"/>
    <property type="match status" value="1"/>
</dbReference>
<dbReference type="PROSITE" id="PS00054">
    <property type="entry name" value="RIBOSOMAL_S11"/>
    <property type="match status" value="1"/>
</dbReference>
<organism>
    <name type="scientific">Yersinia pestis (strain Pestoides F)</name>
    <dbReference type="NCBI Taxonomy" id="386656"/>
    <lineage>
        <taxon>Bacteria</taxon>
        <taxon>Pseudomonadati</taxon>
        <taxon>Pseudomonadota</taxon>
        <taxon>Gammaproteobacteria</taxon>
        <taxon>Enterobacterales</taxon>
        <taxon>Yersiniaceae</taxon>
        <taxon>Yersinia</taxon>
    </lineage>
</organism>
<protein>
    <recommendedName>
        <fullName evidence="1">Small ribosomal subunit protein uS11</fullName>
    </recommendedName>
    <alternativeName>
        <fullName evidence="2">30S ribosomal protein S11</fullName>
    </alternativeName>
</protein>